<evidence type="ECO:0000255" key="1">
    <source>
        <dbReference type="HAMAP-Rule" id="MF_01302"/>
    </source>
</evidence>
<evidence type="ECO:0000305" key="2"/>
<comment type="function">
    <text evidence="1">One of the primary rRNA binding proteins, it binds directly to 16S rRNA central domain where it helps coordinate assembly of the platform of the 30S subunit.</text>
</comment>
<comment type="subunit">
    <text evidence="1">Part of the 30S ribosomal subunit. Contacts proteins S5 and S12.</text>
</comment>
<comment type="similarity">
    <text evidence="1">Belongs to the universal ribosomal protein uS8 family.</text>
</comment>
<accession>Q1J8Z9</accession>
<feature type="chain" id="PRO_0000290944" description="Small ribosomal subunit protein uS8">
    <location>
        <begin position="1"/>
        <end position="132"/>
    </location>
</feature>
<protein>
    <recommendedName>
        <fullName evidence="1">Small ribosomal subunit protein uS8</fullName>
    </recommendedName>
    <alternativeName>
        <fullName evidence="2">30S ribosomal protein S8</fullName>
    </alternativeName>
</protein>
<organism>
    <name type="scientific">Streptococcus pyogenes serotype M4 (strain MGAS10750)</name>
    <dbReference type="NCBI Taxonomy" id="370554"/>
    <lineage>
        <taxon>Bacteria</taxon>
        <taxon>Bacillati</taxon>
        <taxon>Bacillota</taxon>
        <taxon>Bacilli</taxon>
        <taxon>Lactobacillales</taxon>
        <taxon>Streptococcaceae</taxon>
        <taxon>Streptococcus</taxon>
    </lineage>
</organism>
<sequence>MVMTDPIADFLTRIRNANQVKHEVLEVPASNIKKGIAEILKREGFVKNVEVIEDDKQGIIRVFLKYGKNGERVITNLKRISKPGLRVYAKRDDMPKVLNGLGIAIISTSEGLLTDKEARQKNVGGEVIAYVW</sequence>
<proteinExistence type="inferred from homology"/>
<keyword id="KW-0687">Ribonucleoprotein</keyword>
<keyword id="KW-0689">Ribosomal protein</keyword>
<keyword id="KW-0694">RNA-binding</keyword>
<keyword id="KW-0699">rRNA-binding</keyword>
<dbReference type="EMBL" id="CP000262">
    <property type="protein sequence ID" value="ABF37012.1"/>
    <property type="molecule type" value="Genomic_DNA"/>
</dbReference>
<dbReference type="SMR" id="Q1J8Z9"/>
<dbReference type="KEGG" id="spi:MGAS10750_Spy0062"/>
<dbReference type="HOGENOM" id="CLU_098428_0_2_9"/>
<dbReference type="Proteomes" id="UP000002434">
    <property type="component" value="Chromosome"/>
</dbReference>
<dbReference type="GO" id="GO:1990904">
    <property type="term" value="C:ribonucleoprotein complex"/>
    <property type="evidence" value="ECO:0007669"/>
    <property type="project" value="UniProtKB-KW"/>
</dbReference>
<dbReference type="GO" id="GO:0005840">
    <property type="term" value="C:ribosome"/>
    <property type="evidence" value="ECO:0007669"/>
    <property type="project" value="UniProtKB-KW"/>
</dbReference>
<dbReference type="GO" id="GO:0019843">
    <property type="term" value="F:rRNA binding"/>
    <property type="evidence" value="ECO:0007669"/>
    <property type="project" value="UniProtKB-UniRule"/>
</dbReference>
<dbReference type="GO" id="GO:0003735">
    <property type="term" value="F:structural constituent of ribosome"/>
    <property type="evidence" value="ECO:0007669"/>
    <property type="project" value="InterPro"/>
</dbReference>
<dbReference type="GO" id="GO:0006412">
    <property type="term" value="P:translation"/>
    <property type="evidence" value="ECO:0007669"/>
    <property type="project" value="UniProtKB-UniRule"/>
</dbReference>
<dbReference type="FunFam" id="3.30.1370.30:FF:000002">
    <property type="entry name" value="30S ribosomal protein S8"/>
    <property type="match status" value="1"/>
</dbReference>
<dbReference type="FunFam" id="3.30.1490.10:FF:000001">
    <property type="entry name" value="30S ribosomal protein S8"/>
    <property type="match status" value="1"/>
</dbReference>
<dbReference type="Gene3D" id="3.30.1370.30">
    <property type="match status" value="1"/>
</dbReference>
<dbReference type="Gene3D" id="3.30.1490.10">
    <property type="match status" value="1"/>
</dbReference>
<dbReference type="HAMAP" id="MF_01302_B">
    <property type="entry name" value="Ribosomal_uS8_B"/>
    <property type="match status" value="1"/>
</dbReference>
<dbReference type="InterPro" id="IPR000630">
    <property type="entry name" value="Ribosomal_uS8"/>
</dbReference>
<dbReference type="InterPro" id="IPR047863">
    <property type="entry name" value="Ribosomal_uS8_CS"/>
</dbReference>
<dbReference type="InterPro" id="IPR035987">
    <property type="entry name" value="Ribosomal_uS8_sf"/>
</dbReference>
<dbReference type="NCBIfam" id="NF001109">
    <property type="entry name" value="PRK00136.1"/>
    <property type="match status" value="1"/>
</dbReference>
<dbReference type="PANTHER" id="PTHR11758">
    <property type="entry name" value="40S RIBOSOMAL PROTEIN S15A"/>
    <property type="match status" value="1"/>
</dbReference>
<dbReference type="Pfam" id="PF00410">
    <property type="entry name" value="Ribosomal_S8"/>
    <property type="match status" value="1"/>
</dbReference>
<dbReference type="SUPFAM" id="SSF56047">
    <property type="entry name" value="Ribosomal protein S8"/>
    <property type="match status" value="1"/>
</dbReference>
<dbReference type="PROSITE" id="PS00053">
    <property type="entry name" value="RIBOSOMAL_S8"/>
    <property type="match status" value="1"/>
</dbReference>
<gene>
    <name evidence="1" type="primary">rpsH</name>
    <name type="ordered locus">MGAS10750_Spy0062</name>
</gene>
<reference key="1">
    <citation type="journal article" date="2006" name="Proc. Natl. Acad. Sci. U.S.A.">
        <title>Molecular genetic anatomy of inter- and intraserotype variation in the human bacterial pathogen group A Streptococcus.</title>
        <authorList>
            <person name="Beres S.B."/>
            <person name="Richter E.W."/>
            <person name="Nagiec M.J."/>
            <person name="Sumby P."/>
            <person name="Porcella S.F."/>
            <person name="DeLeo F.R."/>
            <person name="Musser J.M."/>
        </authorList>
    </citation>
    <scope>NUCLEOTIDE SEQUENCE [LARGE SCALE GENOMIC DNA]</scope>
    <source>
        <strain>MGAS10750</strain>
    </source>
</reference>
<name>RS8_STRPF</name>